<sequence length="248" mass="27348">MRTAIIAGNWKMNKTVKEAVELVKELKPLVKDAKCDVVVCPTYVCLPAVLEEVKGSNIKVGAQNMHFEESGAYTGEIAPKMLEELGVHYVIIGHSERRQYFNETDETVNKKVKKAFEHNLIPIVCCGESLEEREGNITEKVLEGQIKVGLKELSKEQVEKLVIAYEPIWAIGTGKTATDEQANETIGYIRTVVKDMYGENVADKVRIQYGGSVKPGTIKAQMAKEEIDGALVGGASLKAEDFAAIINY</sequence>
<proteinExistence type="inferred from homology"/>
<comment type="function">
    <text evidence="1">Involved in the gluconeogenesis. Catalyzes stereospecifically the conversion of dihydroxyacetone phosphate (DHAP) to D-glyceraldehyde-3-phosphate (G3P).</text>
</comment>
<comment type="catalytic activity">
    <reaction evidence="1">
        <text>D-glyceraldehyde 3-phosphate = dihydroxyacetone phosphate</text>
        <dbReference type="Rhea" id="RHEA:18585"/>
        <dbReference type="ChEBI" id="CHEBI:57642"/>
        <dbReference type="ChEBI" id="CHEBI:59776"/>
        <dbReference type="EC" id="5.3.1.1"/>
    </reaction>
</comment>
<comment type="pathway">
    <text evidence="1">Carbohydrate biosynthesis; gluconeogenesis.</text>
</comment>
<comment type="pathway">
    <text evidence="1">Carbohydrate degradation; glycolysis; D-glyceraldehyde 3-phosphate from glycerone phosphate: step 1/1.</text>
</comment>
<comment type="subunit">
    <text evidence="1">Homodimer.</text>
</comment>
<comment type="subcellular location">
    <subcellularLocation>
        <location evidence="1">Cytoplasm</location>
    </subcellularLocation>
</comment>
<comment type="similarity">
    <text evidence="1">Belongs to the triosephosphate isomerase family.</text>
</comment>
<feature type="chain" id="PRO_1000071481" description="Triosephosphate isomerase">
    <location>
        <begin position="1"/>
        <end position="248"/>
    </location>
</feature>
<feature type="active site" description="Electrophile" evidence="1">
    <location>
        <position position="94"/>
    </location>
</feature>
<feature type="active site" description="Proton acceptor" evidence="1">
    <location>
        <position position="166"/>
    </location>
</feature>
<feature type="binding site" evidence="1">
    <location>
        <begin position="9"/>
        <end position="11"/>
    </location>
    <ligand>
        <name>substrate</name>
    </ligand>
</feature>
<feature type="binding site" evidence="1">
    <location>
        <position position="172"/>
    </location>
    <ligand>
        <name>substrate</name>
    </ligand>
</feature>
<feature type="binding site" evidence="1">
    <location>
        <position position="212"/>
    </location>
    <ligand>
        <name>substrate</name>
    </ligand>
</feature>
<feature type="binding site" evidence="1">
    <location>
        <begin position="233"/>
        <end position="234"/>
    </location>
    <ligand>
        <name>substrate</name>
    </ligand>
</feature>
<gene>
    <name evidence="1" type="primary">tpiA</name>
    <name type="ordered locus">CLI_0293</name>
</gene>
<dbReference type="EC" id="5.3.1.1" evidence="1"/>
<dbReference type="EMBL" id="CP000728">
    <property type="protein sequence ID" value="ABS40011.1"/>
    <property type="molecule type" value="Genomic_DNA"/>
</dbReference>
<dbReference type="RefSeq" id="WP_011987291.1">
    <property type="nucleotide sequence ID" value="NC_009699.1"/>
</dbReference>
<dbReference type="SMR" id="A7G9Y1"/>
<dbReference type="KEGG" id="cbf:CLI_0293"/>
<dbReference type="HOGENOM" id="CLU_024251_2_3_9"/>
<dbReference type="UniPathway" id="UPA00109">
    <property type="reaction ID" value="UER00189"/>
</dbReference>
<dbReference type="UniPathway" id="UPA00138"/>
<dbReference type="Proteomes" id="UP000002410">
    <property type="component" value="Chromosome"/>
</dbReference>
<dbReference type="GO" id="GO:0005829">
    <property type="term" value="C:cytosol"/>
    <property type="evidence" value="ECO:0007669"/>
    <property type="project" value="TreeGrafter"/>
</dbReference>
<dbReference type="GO" id="GO:0004807">
    <property type="term" value="F:triose-phosphate isomerase activity"/>
    <property type="evidence" value="ECO:0007669"/>
    <property type="project" value="UniProtKB-UniRule"/>
</dbReference>
<dbReference type="GO" id="GO:0006094">
    <property type="term" value="P:gluconeogenesis"/>
    <property type="evidence" value="ECO:0007669"/>
    <property type="project" value="UniProtKB-UniRule"/>
</dbReference>
<dbReference type="GO" id="GO:0046166">
    <property type="term" value="P:glyceraldehyde-3-phosphate biosynthetic process"/>
    <property type="evidence" value="ECO:0007669"/>
    <property type="project" value="TreeGrafter"/>
</dbReference>
<dbReference type="GO" id="GO:0019563">
    <property type="term" value="P:glycerol catabolic process"/>
    <property type="evidence" value="ECO:0007669"/>
    <property type="project" value="TreeGrafter"/>
</dbReference>
<dbReference type="GO" id="GO:0006096">
    <property type="term" value="P:glycolytic process"/>
    <property type="evidence" value="ECO:0007669"/>
    <property type="project" value="UniProtKB-UniRule"/>
</dbReference>
<dbReference type="CDD" id="cd00311">
    <property type="entry name" value="TIM"/>
    <property type="match status" value="1"/>
</dbReference>
<dbReference type="FunFam" id="3.20.20.70:FF:000016">
    <property type="entry name" value="Triosephosphate isomerase"/>
    <property type="match status" value="1"/>
</dbReference>
<dbReference type="Gene3D" id="3.20.20.70">
    <property type="entry name" value="Aldolase class I"/>
    <property type="match status" value="1"/>
</dbReference>
<dbReference type="HAMAP" id="MF_00147_B">
    <property type="entry name" value="TIM_B"/>
    <property type="match status" value="1"/>
</dbReference>
<dbReference type="InterPro" id="IPR013785">
    <property type="entry name" value="Aldolase_TIM"/>
</dbReference>
<dbReference type="InterPro" id="IPR035990">
    <property type="entry name" value="TIM_sf"/>
</dbReference>
<dbReference type="InterPro" id="IPR022896">
    <property type="entry name" value="TrioseP_Isoase_bac/euk"/>
</dbReference>
<dbReference type="InterPro" id="IPR000652">
    <property type="entry name" value="Triosephosphate_isomerase"/>
</dbReference>
<dbReference type="InterPro" id="IPR020861">
    <property type="entry name" value="Triosephosphate_isomerase_AS"/>
</dbReference>
<dbReference type="NCBIfam" id="TIGR00419">
    <property type="entry name" value="tim"/>
    <property type="match status" value="1"/>
</dbReference>
<dbReference type="PANTHER" id="PTHR21139">
    <property type="entry name" value="TRIOSEPHOSPHATE ISOMERASE"/>
    <property type="match status" value="1"/>
</dbReference>
<dbReference type="PANTHER" id="PTHR21139:SF42">
    <property type="entry name" value="TRIOSEPHOSPHATE ISOMERASE"/>
    <property type="match status" value="1"/>
</dbReference>
<dbReference type="Pfam" id="PF00121">
    <property type="entry name" value="TIM"/>
    <property type="match status" value="1"/>
</dbReference>
<dbReference type="SUPFAM" id="SSF51351">
    <property type="entry name" value="Triosephosphate isomerase (TIM)"/>
    <property type="match status" value="1"/>
</dbReference>
<dbReference type="PROSITE" id="PS00171">
    <property type="entry name" value="TIM_1"/>
    <property type="match status" value="1"/>
</dbReference>
<dbReference type="PROSITE" id="PS51440">
    <property type="entry name" value="TIM_2"/>
    <property type="match status" value="1"/>
</dbReference>
<organism>
    <name type="scientific">Clostridium botulinum (strain Langeland / NCTC 10281 / Type F)</name>
    <dbReference type="NCBI Taxonomy" id="441772"/>
    <lineage>
        <taxon>Bacteria</taxon>
        <taxon>Bacillati</taxon>
        <taxon>Bacillota</taxon>
        <taxon>Clostridia</taxon>
        <taxon>Eubacteriales</taxon>
        <taxon>Clostridiaceae</taxon>
        <taxon>Clostridium</taxon>
    </lineage>
</organism>
<evidence type="ECO:0000255" key="1">
    <source>
        <dbReference type="HAMAP-Rule" id="MF_00147"/>
    </source>
</evidence>
<protein>
    <recommendedName>
        <fullName evidence="1">Triosephosphate isomerase</fullName>
        <shortName evidence="1">TIM</shortName>
        <shortName evidence="1">TPI</shortName>
        <ecNumber evidence="1">5.3.1.1</ecNumber>
    </recommendedName>
    <alternativeName>
        <fullName evidence="1">Triose-phosphate isomerase</fullName>
    </alternativeName>
</protein>
<keyword id="KW-0963">Cytoplasm</keyword>
<keyword id="KW-0312">Gluconeogenesis</keyword>
<keyword id="KW-0324">Glycolysis</keyword>
<keyword id="KW-0413">Isomerase</keyword>
<reference key="1">
    <citation type="submission" date="2007-06" db="EMBL/GenBank/DDBJ databases">
        <authorList>
            <person name="Brinkac L.M."/>
            <person name="Daugherty S."/>
            <person name="Dodson R.J."/>
            <person name="Madupu R."/>
            <person name="Brown J.L."/>
            <person name="Bruce D."/>
            <person name="Detter C."/>
            <person name="Munk C."/>
            <person name="Smith L.A."/>
            <person name="Smith T.J."/>
            <person name="White O."/>
            <person name="Brettin T.S."/>
        </authorList>
    </citation>
    <scope>NUCLEOTIDE SEQUENCE [LARGE SCALE GENOMIC DNA]</scope>
    <source>
        <strain>Langeland / NCTC 10281 / Type F</strain>
    </source>
</reference>
<name>TPIS_CLOBL</name>
<accession>A7G9Y1</accession>